<comment type="function">
    <text evidence="2">GTP hydrolase that promotes the GTP-dependent binding of aminoacyl-tRNA to the A-site of ribosomes during protein biosynthesis.</text>
</comment>
<comment type="catalytic activity">
    <reaction evidence="2">
        <text>GTP + H2O = GDP + phosphate + H(+)</text>
        <dbReference type="Rhea" id="RHEA:19669"/>
        <dbReference type="ChEBI" id="CHEBI:15377"/>
        <dbReference type="ChEBI" id="CHEBI:15378"/>
        <dbReference type="ChEBI" id="CHEBI:37565"/>
        <dbReference type="ChEBI" id="CHEBI:43474"/>
        <dbReference type="ChEBI" id="CHEBI:58189"/>
        <dbReference type="EC" id="3.6.5.3"/>
    </reaction>
    <physiologicalReaction direction="left-to-right" evidence="2">
        <dbReference type="Rhea" id="RHEA:19670"/>
    </physiologicalReaction>
</comment>
<comment type="subunit">
    <text evidence="2">Monomer.</text>
</comment>
<comment type="subcellular location">
    <subcellularLocation>
        <location evidence="2">Cytoplasm</location>
    </subcellularLocation>
</comment>
<comment type="similarity">
    <text evidence="2">Belongs to the TRAFAC class translation factor GTPase superfamily. Classic translation factor GTPase family. EF-Tu/EF-1A subfamily.</text>
</comment>
<organism>
    <name type="scientific">Deinonema sp</name>
    <dbReference type="NCBI Taxonomy" id="29455"/>
    <lineage>
        <taxon>Bacteria</taxon>
        <taxon>Deinonema</taxon>
    </lineage>
</organism>
<feature type="chain" id="PRO_0000091319" description="Elongation factor Tu">
    <location>
        <begin position="1"/>
        <end position="405"/>
    </location>
</feature>
<feature type="domain" description="tr-type G">
    <location>
        <begin position="10"/>
        <end position="215"/>
    </location>
</feature>
<feature type="region of interest" description="G1" evidence="1">
    <location>
        <begin position="19"/>
        <end position="26"/>
    </location>
</feature>
<feature type="region of interest" description="G2" evidence="1">
    <location>
        <begin position="61"/>
        <end position="65"/>
    </location>
</feature>
<feature type="region of interest" description="G3" evidence="1">
    <location>
        <begin position="82"/>
        <end position="85"/>
    </location>
</feature>
<feature type="region of interest" description="G4" evidence="1">
    <location>
        <begin position="137"/>
        <end position="140"/>
    </location>
</feature>
<feature type="region of interest" description="G5" evidence="1">
    <location>
        <begin position="175"/>
        <end position="177"/>
    </location>
</feature>
<feature type="binding site" evidence="2">
    <location>
        <begin position="19"/>
        <end position="26"/>
    </location>
    <ligand>
        <name>GTP</name>
        <dbReference type="ChEBI" id="CHEBI:37565"/>
    </ligand>
</feature>
<feature type="binding site" evidence="2">
    <location>
        <position position="26"/>
    </location>
    <ligand>
        <name>Mg(2+)</name>
        <dbReference type="ChEBI" id="CHEBI:18420"/>
    </ligand>
</feature>
<feature type="binding site" evidence="2">
    <location>
        <begin position="82"/>
        <end position="86"/>
    </location>
    <ligand>
        <name>GTP</name>
        <dbReference type="ChEBI" id="CHEBI:37565"/>
    </ligand>
</feature>
<feature type="binding site" evidence="2">
    <location>
        <begin position="137"/>
        <end position="140"/>
    </location>
    <ligand>
        <name>GTP</name>
        <dbReference type="ChEBI" id="CHEBI:37565"/>
    </ligand>
</feature>
<accession>P33168</accession>
<keyword id="KW-0963">Cytoplasm</keyword>
<keyword id="KW-0251">Elongation factor</keyword>
<keyword id="KW-0342">GTP-binding</keyword>
<keyword id="KW-0378">Hydrolase</keyword>
<keyword id="KW-0460">Magnesium</keyword>
<keyword id="KW-0479">Metal-binding</keyword>
<keyword id="KW-0547">Nucleotide-binding</keyword>
<keyword id="KW-0648">Protein biosynthesis</keyword>
<dbReference type="EC" id="3.6.5.3" evidence="2"/>
<dbReference type="PIR" id="C60663">
    <property type="entry name" value="C60663"/>
</dbReference>
<dbReference type="SMR" id="P33168"/>
<dbReference type="GO" id="GO:0005829">
    <property type="term" value="C:cytosol"/>
    <property type="evidence" value="ECO:0007669"/>
    <property type="project" value="TreeGrafter"/>
</dbReference>
<dbReference type="GO" id="GO:0005525">
    <property type="term" value="F:GTP binding"/>
    <property type="evidence" value="ECO:0007669"/>
    <property type="project" value="UniProtKB-UniRule"/>
</dbReference>
<dbReference type="GO" id="GO:0003924">
    <property type="term" value="F:GTPase activity"/>
    <property type="evidence" value="ECO:0007669"/>
    <property type="project" value="InterPro"/>
</dbReference>
<dbReference type="GO" id="GO:0003746">
    <property type="term" value="F:translation elongation factor activity"/>
    <property type="evidence" value="ECO:0007669"/>
    <property type="project" value="UniProtKB-UniRule"/>
</dbReference>
<dbReference type="CDD" id="cd01884">
    <property type="entry name" value="EF_Tu"/>
    <property type="match status" value="1"/>
</dbReference>
<dbReference type="CDD" id="cd03697">
    <property type="entry name" value="EFTU_II"/>
    <property type="match status" value="1"/>
</dbReference>
<dbReference type="CDD" id="cd03707">
    <property type="entry name" value="EFTU_III"/>
    <property type="match status" value="1"/>
</dbReference>
<dbReference type="FunFam" id="2.40.30.10:FF:000001">
    <property type="entry name" value="Elongation factor Tu"/>
    <property type="match status" value="1"/>
</dbReference>
<dbReference type="FunFam" id="3.40.50.300:FF:000003">
    <property type="entry name" value="Elongation factor Tu"/>
    <property type="match status" value="1"/>
</dbReference>
<dbReference type="Gene3D" id="3.40.50.300">
    <property type="entry name" value="P-loop containing nucleotide triphosphate hydrolases"/>
    <property type="match status" value="1"/>
</dbReference>
<dbReference type="Gene3D" id="2.40.30.10">
    <property type="entry name" value="Translation factors"/>
    <property type="match status" value="2"/>
</dbReference>
<dbReference type="HAMAP" id="MF_00118_B">
    <property type="entry name" value="EF_Tu_B"/>
    <property type="match status" value="1"/>
</dbReference>
<dbReference type="InterPro" id="IPR041709">
    <property type="entry name" value="EF-Tu_GTP-bd"/>
</dbReference>
<dbReference type="InterPro" id="IPR050055">
    <property type="entry name" value="EF-Tu_GTPase"/>
</dbReference>
<dbReference type="InterPro" id="IPR004161">
    <property type="entry name" value="EFTu-like_2"/>
</dbReference>
<dbReference type="InterPro" id="IPR033720">
    <property type="entry name" value="EFTU_2"/>
</dbReference>
<dbReference type="InterPro" id="IPR031157">
    <property type="entry name" value="G_TR_CS"/>
</dbReference>
<dbReference type="InterPro" id="IPR027417">
    <property type="entry name" value="P-loop_NTPase"/>
</dbReference>
<dbReference type="InterPro" id="IPR005225">
    <property type="entry name" value="Small_GTP-bd"/>
</dbReference>
<dbReference type="InterPro" id="IPR000795">
    <property type="entry name" value="T_Tr_GTP-bd_dom"/>
</dbReference>
<dbReference type="InterPro" id="IPR009000">
    <property type="entry name" value="Transl_B-barrel_sf"/>
</dbReference>
<dbReference type="InterPro" id="IPR009001">
    <property type="entry name" value="Transl_elong_EF1A/Init_IF2_C"/>
</dbReference>
<dbReference type="InterPro" id="IPR004541">
    <property type="entry name" value="Transl_elong_EFTu/EF1A_bac/org"/>
</dbReference>
<dbReference type="InterPro" id="IPR004160">
    <property type="entry name" value="Transl_elong_EFTu/EF1A_C"/>
</dbReference>
<dbReference type="NCBIfam" id="TIGR00485">
    <property type="entry name" value="EF-Tu"/>
    <property type="match status" value="1"/>
</dbReference>
<dbReference type="NCBIfam" id="NF000766">
    <property type="entry name" value="PRK00049.1"/>
    <property type="match status" value="1"/>
</dbReference>
<dbReference type="NCBIfam" id="NF009372">
    <property type="entry name" value="PRK12735.1"/>
    <property type="match status" value="1"/>
</dbReference>
<dbReference type="NCBIfam" id="NF009373">
    <property type="entry name" value="PRK12736.1"/>
    <property type="match status" value="1"/>
</dbReference>
<dbReference type="NCBIfam" id="TIGR00231">
    <property type="entry name" value="small_GTP"/>
    <property type="match status" value="1"/>
</dbReference>
<dbReference type="PANTHER" id="PTHR43721:SF22">
    <property type="entry name" value="ELONGATION FACTOR TU, MITOCHONDRIAL"/>
    <property type="match status" value="1"/>
</dbReference>
<dbReference type="PANTHER" id="PTHR43721">
    <property type="entry name" value="ELONGATION FACTOR TU-RELATED"/>
    <property type="match status" value="1"/>
</dbReference>
<dbReference type="Pfam" id="PF00009">
    <property type="entry name" value="GTP_EFTU"/>
    <property type="match status" value="1"/>
</dbReference>
<dbReference type="Pfam" id="PF03144">
    <property type="entry name" value="GTP_EFTU_D2"/>
    <property type="match status" value="1"/>
</dbReference>
<dbReference type="Pfam" id="PF03143">
    <property type="entry name" value="GTP_EFTU_D3"/>
    <property type="match status" value="1"/>
</dbReference>
<dbReference type="PRINTS" id="PR00315">
    <property type="entry name" value="ELONGATNFCT"/>
</dbReference>
<dbReference type="SUPFAM" id="SSF50465">
    <property type="entry name" value="EF-Tu/eEF-1alpha/eIF2-gamma C-terminal domain"/>
    <property type="match status" value="1"/>
</dbReference>
<dbReference type="SUPFAM" id="SSF52540">
    <property type="entry name" value="P-loop containing nucleoside triphosphate hydrolases"/>
    <property type="match status" value="1"/>
</dbReference>
<dbReference type="SUPFAM" id="SSF50447">
    <property type="entry name" value="Translation proteins"/>
    <property type="match status" value="1"/>
</dbReference>
<dbReference type="PROSITE" id="PS00301">
    <property type="entry name" value="G_TR_1"/>
    <property type="match status" value="1"/>
</dbReference>
<dbReference type="PROSITE" id="PS51722">
    <property type="entry name" value="G_TR_2"/>
    <property type="match status" value="1"/>
</dbReference>
<reference key="1">
    <citation type="journal article" date="1990" name="Arch. Microbiol.">
        <title>Complete nucleotide sequences of seven eubacterial genes coding for the elongation factor Tu: functional, structural and phylogenetic evaluations.</title>
        <authorList>
            <person name="Ludwig W."/>
            <person name="Weizenegger M."/>
            <person name="Betzl D."/>
            <person name="Leidel E."/>
            <person name="Lenz T."/>
            <person name="Ludvigsen A."/>
            <person name="Moellenhoff D."/>
            <person name="Wenzig P."/>
            <person name="Schleifer K.H."/>
        </authorList>
    </citation>
    <scope>NUCLEOTIDE SEQUENCE [GENOMIC DNA]</scope>
</reference>
<sequence>MAKGTFERTKPHVNVGTIGHVDHGKTTLTAAITFTAAASDPTIEKLAYDQIDKAPEEKARGITINTAHVEYNTPTRHYSHVDCPGHADYVKNMITGAAQMDGAILVVSSADGPMPQTREHILLARQVGVPYIVVFMNKVDMVDDEELLELVEMEVRELLSKYEFPGDDLPVIKGSALQALEALQANPKTARGEDKWVDRIWELLDAVDSYIPTPERATDKTFLMPVEDVFTITGRGTVATGRVERGVVKVQDEVEIIGLRDTKKTTVTGIEMHRKLLDSGMAGDNVGVLLRGVARDDVERGQVLAKPGSIKPHTKFEASVYVLSKDEGGRHSAFFGGYRPQFYFRTTDVTGVVELPEGVEMVMPGDNITFVVELIKPIAMEEGLRFAIREGGRTVGAGVVAKVLE</sequence>
<evidence type="ECO:0000250" key="1"/>
<evidence type="ECO:0000255" key="2">
    <source>
        <dbReference type="HAMAP-Rule" id="MF_00118"/>
    </source>
</evidence>
<proteinExistence type="inferred from homology"/>
<gene>
    <name evidence="2" type="primary">tuf</name>
</gene>
<name>EFTU_DEISP</name>
<protein>
    <recommendedName>
        <fullName evidence="2">Elongation factor Tu</fullName>
        <shortName evidence="2">EF-Tu</shortName>
        <ecNumber evidence="2">3.6.5.3</ecNumber>
    </recommendedName>
</protein>